<proteinExistence type="evidence at protein level"/>
<keyword id="KW-0002">3D-structure</keyword>
<keyword id="KW-0067">ATP-binding</keyword>
<keyword id="KW-0143">Chaperone</keyword>
<keyword id="KW-0547">Nucleotide-binding</keyword>
<keyword id="KW-0539">Nucleus</keyword>
<keyword id="KW-0597">Phosphoprotein</keyword>
<keyword id="KW-1185">Reference proteome</keyword>
<gene>
    <name type="primary">mdn1</name>
    <name type="ORF">SPCC737.08</name>
</gene>
<organism>
    <name type="scientific">Schizosaccharomyces pombe (strain 972 / ATCC 24843)</name>
    <name type="common">Fission yeast</name>
    <dbReference type="NCBI Taxonomy" id="284812"/>
    <lineage>
        <taxon>Eukaryota</taxon>
        <taxon>Fungi</taxon>
        <taxon>Dikarya</taxon>
        <taxon>Ascomycota</taxon>
        <taxon>Taphrinomycotina</taxon>
        <taxon>Schizosaccharomycetes</taxon>
        <taxon>Schizosaccharomycetales</taxon>
        <taxon>Schizosaccharomycetaceae</taxon>
        <taxon>Schizosaccharomyces</taxon>
    </lineage>
</organism>
<name>MDN1_SCHPO</name>
<feature type="chain" id="PRO_0000363386" description="Midasin">
    <location>
        <begin position="1"/>
        <end position="4717"/>
    </location>
</feature>
<feature type="domain" description="VWFA" evidence="3">
    <location>
        <begin position="4505"/>
        <end position="4707"/>
    </location>
</feature>
<feature type="region of interest" description="AAA-ATPase protomer 1" evidence="2">
    <location>
        <begin position="149"/>
        <end position="384"/>
    </location>
</feature>
<feature type="region of interest" description="AAA-ATPase protomer 2" evidence="2">
    <location>
        <begin position="458"/>
        <end position="797"/>
    </location>
</feature>
<feature type="region of interest" description="AAA-ATPase protomer 3" evidence="2">
    <location>
        <begin position="871"/>
        <end position="1131"/>
    </location>
</feature>
<feature type="region of interest" description="AAA-ATPase protomer 4" evidence="2">
    <location>
        <begin position="1157"/>
        <end position="1448"/>
    </location>
</feature>
<feature type="region of interest" description="AAA-ATPase protomer 5" evidence="2">
    <location>
        <begin position="1552"/>
        <end position="1811"/>
    </location>
</feature>
<feature type="region of interest" description="AAA-ATPase protomer 6" evidence="2">
    <location>
        <begin position="1858"/>
        <end position="2106"/>
    </location>
</feature>
<feature type="region of interest" description="Linker" evidence="1">
    <location>
        <begin position="2173"/>
        <end position="3925"/>
    </location>
</feature>
<feature type="region of interest" description="Disordered" evidence="4">
    <location>
        <begin position="3898"/>
        <end position="3924"/>
    </location>
</feature>
<feature type="region of interest" description="Disordered" evidence="4">
    <location>
        <begin position="3936"/>
        <end position="4283"/>
    </location>
</feature>
<feature type="region of interest" description="Disordered" evidence="4">
    <location>
        <begin position="4295"/>
        <end position="4365"/>
    </location>
</feature>
<feature type="compositionally biased region" description="Acidic residues" evidence="4">
    <location>
        <begin position="3936"/>
        <end position="3950"/>
    </location>
</feature>
<feature type="compositionally biased region" description="Acidic residues" evidence="4">
    <location>
        <begin position="3973"/>
        <end position="3993"/>
    </location>
</feature>
<feature type="compositionally biased region" description="Polar residues" evidence="4">
    <location>
        <begin position="4020"/>
        <end position="4030"/>
    </location>
</feature>
<feature type="compositionally biased region" description="Basic and acidic residues" evidence="4">
    <location>
        <begin position="4031"/>
        <end position="4049"/>
    </location>
</feature>
<feature type="compositionally biased region" description="Acidic residues" evidence="4">
    <location>
        <begin position="4050"/>
        <end position="4066"/>
    </location>
</feature>
<feature type="compositionally biased region" description="Basic and acidic residues" evidence="4">
    <location>
        <begin position="4080"/>
        <end position="4103"/>
    </location>
</feature>
<feature type="compositionally biased region" description="Acidic residues" evidence="4">
    <location>
        <begin position="4104"/>
        <end position="4177"/>
    </location>
</feature>
<feature type="compositionally biased region" description="Acidic residues" evidence="4">
    <location>
        <begin position="4184"/>
        <end position="4196"/>
    </location>
</feature>
<feature type="compositionally biased region" description="Acidic residues" evidence="4">
    <location>
        <begin position="4226"/>
        <end position="4236"/>
    </location>
</feature>
<feature type="compositionally biased region" description="Basic and acidic residues" evidence="4">
    <location>
        <begin position="4258"/>
        <end position="4275"/>
    </location>
</feature>
<feature type="compositionally biased region" description="Basic and acidic residues" evidence="4">
    <location>
        <begin position="4329"/>
        <end position="4342"/>
    </location>
</feature>
<feature type="compositionally biased region" description="Polar residues" evidence="4">
    <location>
        <begin position="4343"/>
        <end position="4355"/>
    </location>
</feature>
<feature type="binding site" evidence="2">
    <location>
        <begin position="159"/>
        <end position="166"/>
    </location>
    <ligand>
        <name>ATP</name>
        <dbReference type="ChEBI" id="CHEBI:30616"/>
    </ligand>
</feature>
<feature type="binding site" evidence="2">
    <location>
        <begin position="474"/>
        <end position="481"/>
    </location>
    <ligand>
        <name>ATP</name>
        <dbReference type="ChEBI" id="CHEBI:30616"/>
    </ligand>
</feature>
<feature type="binding site" evidence="2">
    <location>
        <begin position="901"/>
        <end position="908"/>
    </location>
    <ligand>
        <name>ATP</name>
        <dbReference type="ChEBI" id="CHEBI:30616"/>
    </ligand>
</feature>
<feature type="binding site" evidence="2">
    <location>
        <begin position="1193"/>
        <end position="1200"/>
    </location>
    <ligand>
        <name>ATP</name>
        <dbReference type="ChEBI" id="CHEBI:30616"/>
    </ligand>
</feature>
<feature type="binding site" evidence="2">
    <location>
        <begin position="1566"/>
        <end position="1573"/>
    </location>
    <ligand>
        <name>ATP</name>
        <dbReference type="ChEBI" id="CHEBI:30616"/>
    </ligand>
</feature>
<feature type="binding site" evidence="2">
    <location>
        <begin position="1876"/>
        <end position="1883"/>
    </location>
    <ligand>
        <name>ATP</name>
        <dbReference type="ChEBI" id="CHEBI:30616"/>
    </ligand>
</feature>
<feature type="modified residue" description="Phosphoserine" evidence="6">
    <location>
        <position position="593"/>
    </location>
</feature>
<reference key="1">
    <citation type="journal article" date="2002" name="Nature">
        <title>The genome sequence of Schizosaccharomyces pombe.</title>
        <authorList>
            <person name="Wood V."/>
            <person name="Gwilliam R."/>
            <person name="Rajandream M.A."/>
            <person name="Lyne M.H."/>
            <person name="Lyne R."/>
            <person name="Stewart A."/>
            <person name="Sgouros J.G."/>
            <person name="Peat N."/>
            <person name="Hayles J."/>
            <person name="Baker S.G."/>
            <person name="Basham D."/>
            <person name="Bowman S."/>
            <person name="Brooks K."/>
            <person name="Brown D."/>
            <person name="Brown S."/>
            <person name="Chillingworth T."/>
            <person name="Churcher C.M."/>
            <person name="Collins M."/>
            <person name="Connor R."/>
            <person name="Cronin A."/>
            <person name="Davis P."/>
            <person name="Feltwell T."/>
            <person name="Fraser A."/>
            <person name="Gentles S."/>
            <person name="Goble A."/>
            <person name="Hamlin N."/>
            <person name="Harris D.E."/>
            <person name="Hidalgo J."/>
            <person name="Hodgson G."/>
            <person name="Holroyd S."/>
            <person name="Hornsby T."/>
            <person name="Howarth S."/>
            <person name="Huckle E.J."/>
            <person name="Hunt S."/>
            <person name="Jagels K."/>
            <person name="James K.D."/>
            <person name="Jones L."/>
            <person name="Jones M."/>
            <person name="Leather S."/>
            <person name="McDonald S."/>
            <person name="McLean J."/>
            <person name="Mooney P."/>
            <person name="Moule S."/>
            <person name="Mungall K.L."/>
            <person name="Murphy L.D."/>
            <person name="Niblett D."/>
            <person name="Odell C."/>
            <person name="Oliver K."/>
            <person name="O'Neil S."/>
            <person name="Pearson D."/>
            <person name="Quail M.A."/>
            <person name="Rabbinowitsch E."/>
            <person name="Rutherford K.M."/>
            <person name="Rutter S."/>
            <person name="Saunders D."/>
            <person name="Seeger K."/>
            <person name="Sharp S."/>
            <person name="Skelton J."/>
            <person name="Simmonds M.N."/>
            <person name="Squares R."/>
            <person name="Squares S."/>
            <person name="Stevens K."/>
            <person name="Taylor K."/>
            <person name="Taylor R.G."/>
            <person name="Tivey A."/>
            <person name="Walsh S.V."/>
            <person name="Warren T."/>
            <person name="Whitehead S."/>
            <person name="Woodward J.R."/>
            <person name="Volckaert G."/>
            <person name="Aert R."/>
            <person name="Robben J."/>
            <person name="Grymonprez B."/>
            <person name="Weltjens I."/>
            <person name="Vanstreels E."/>
            <person name="Rieger M."/>
            <person name="Schaefer M."/>
            <person name="Mueller-Auer S."/>
            <person name="Gabel C."/>
            <person name="Fuchs M."/>
            <person name="Duesterhoeft A."/>
            <person name="Fritzc C."/>
            <person name="Holzer E."/>
            <person name="Moestl D."/>
            <person name="Hilbert H."/>
            <person name="Borzym K."/>
            <person name="Langer I."/>
            <person name="Beck A."/>
            <person name="Lehrach H."/>
            <person name="Reinhardt R."/>
            <person name="Pohl T.M."/>
            <person name="Eger P."/>
            <person name="Zimmermann W."/>
            <person name="Wedler H."/>
            <person name="Wambutt R."/>
            <person name="Purnelle B."/>
            <person name="Goffeau A."/>
            <person name="Cadieu E."/>
            <person name="Dreano S."/>
            <person name="Gloux S."/>
            <person name="Lelaure V."/>
            <person name="Mottier S."/>
            <person name="Galibert F."/>
            <person name="Aves S.J."/>
            <person name="Xiang Z."/>
            <person name="Hunt C."/>
            <person name="Moore K."/>
            <person name="Hurst S.M."/>
            <person name="Lucas M."/>
            <person name="Rochet M."/>
            <person name="Gaillardin C."/>
            <person name="Tallada V.A."/>
            <person name="Garzon A."/>
            <person name="Thode G."/>
            <person name="Daga R.R."/>
            <person name="Cruzado L."/>
            <person name="Jimenez J."/>
            <person name="Sanchez M."/>
            <person name="del Rey F."/>
            <person name="Benito J."/>
            <person name="Dominguez A."/>
            <person name="Revuelta J.L."/>
            <person name="Moreno S."/>
            <person name="Armstrong J."/>
            <person name="Forsburg S.L."/>
            <person name="Cerutti L."/>
            <person name="Lowe T."/>
            <person name="McCombie W.R."/>
            <person name="Paulsen I."/>
            <person name="Potashkin J."/>
            <person name="Shpakovski G.V."/>
            <person name="Ussery D."/>
            <person name="Barrell B.G."/>
            <person name="Nurse P."/>
        </authorList>
    </citation>
    <scope>NUCLEOTIDE SEQUENCE [LARGE SCALE GENOMIC DNA]</scope>
    <source>
        <strain>972 / ATCC 24843</strain>
    </source>
</reference>
<reference key="2">
    <citation type="journal article" date="2006" name="Nat. Biotechnol.">
        <title>ORFeome cloning and global analysis of protein localization in the fission yeast Schizosaccharomyces pombe.</title>
        <authorList>
            <person name="Matsuyama A."/>
            <person name="Arai R."/>
            <person name="Yashiroda Y."/>
            <person name="Shirai A."/>
            <person name="Kamata A."/>
            <person name="Sekido S."/>
            <person name="Kobayashi Y."/>
            <person name="Hashimoto A."/>
            <person name="Hamamoto M."/>
            <person name="Hiraoka Y."/>
            <person name="Horinouchi S."/>
            <person name="Yoshida M."/>
        </authorList>
    </citation>
    <scope>SUBCELLULAR LOCATION [LARGE SCALE ANALYSIS]</scope>
</reference>
<reference key="3">
    <citation type="journal article" date="2008" name="J. Proteome Res.">
        <title>Phosphoproteome analysis of fission yeast.</title>
        <authorList>
            <person name="Wilson-Grady J.T."/>
            <person name="Villen J."/>
            <person name="Gygi S.P."/>
        </authorList>
    </citation>
    <scope>PHOSPHORYLATION [LARGE SCALE ANALYSIS] AT SER-593</scope>
    <scope>IDENTIFICATION BY MASS SPECTROMETRY</scope>
</reference>
<dbReference type="EMBL" id="CU329672">
    <property type="protein sequence ID" value="CAA20864.1"/>
    <property type="molecule type" value="Genomic_DNA"/>
</dbReference>
<dbReference type="PIR" id="T41581">
    <property type="entry name" value="T41581"/>
</dbReference>
<dbReference type="RefSeq" id="NP_588370.1">
    <property type="nucleotide sequence ID" value="NM_001023361.2"/>
</dbReference>
<dbReference type="PDB" id="6OR5">
    <property type="method" value="EM"/>
    <property type="resolution" value="4.00 A"/>
    <property type="chains" value="A=1-4717"/>
</dbReference>
<dbReference type="PDB" id="6OR6">
    <property type="method" value="EM"/>
    <property type="resolution" value="5.30 A"/>
    <property type="chains" value="A=1-4717"/>
</dbReference>
<dbReference type="PDB" id="6ORB">
    <property type="method" value="EM"/>
    <property type="resolution" value="7.70 A"/>
    <property type="chains" value="A=1-4717"/>
</dbReference>
<dbReference type="PDBsum" id="6OR5"/>
<dbReference type="PDBsum" id="6OR6"/>
<dbReference type="PDBsum" id="6ORB"/>
<dbReference type="EMDB" id="EMD-9032"/>
<dbReference type="SMR" id="O94248"/>
<dbReference type="BioGRID" id="276054">
    <property type="interactions" value="2"/>
</dbReference>
<dbReference type="FunCoup" id="O94248">
    <property type="interactions" value="431"/>
</dbReference>
<dbReference type="STRING" id="284812.O94248"/>
<dbReference type="iPTMnet" id="O94248"/>
<dbReference type="PaxDb" id="4896-SPCC737.08.1"/>
<dbReference type="EnsemblFungi" id="SPCC737.08.1">
    <property type="protein sequence ID" value="SPCC737.08.1:pep"/>
    <property type="gene ID" value="SPCC737.08"/>
</dbReference>
<dbReference type="GeneID" id="2539491"/>
<dbReference type="KEGG" id="spo:2539491"/>
<dbReference type="PomBase" id="SPCC737.08">
    <property type="gene designation" value="mdn1"/>
</dbReference>
<dbReference type="VEuPathDB" id="FungiDB:SPCC737.08"/>
<dbReference type="eggNOG" id="KOG1808">
    <property type="taxonomic scope" value="Eukaryota"/>
</dbReference>
<dbReference type="HOGENOM" id="CLU_000050_0_2_1"/>
<dbReference type="InParanoid" id="O94248"/>
<dbReference type="OMA" id="ILEQWHR"/>
<dbReference type="PhylomeDB" id="O94248"/>
<dbReference type="PRO" id="PR:O94248"/>
<dbReference type="Proteomes" id="UP000002485">
    <property type="component" value="Chromosome III"/>
</dbReference>
<dbReference type="GO" id="GO:0005730">
    <property type="term" value="C:nucleolus"/>
    <property type="evidence" value="ECO:0007669"/>
    <property type="project" value="UniProtKB-SubCell"/>
</dbReference>
<dbReference type="GO" id="GO:0005654">
    <property type="term" value="C:nucleoplasm"/>
    <property type="evidence" value="ECO:0007669"/>
    <property type="project" value="UniProtKB-SubCell"/>
</dbReference>
<dbReference type="GO" id="GO:0005634">
    <property type="term" value="C:nucleus"/>
    <property type="evidence" value="ECO:0000266"/>
    <property type="project" value="PomBase"/>
</dbReference>
<dbReference type="GO" id="GO:0030687">
    <property type="term" value="C:preribosome, large subunit precursor"/>
    <property type="evidence" value="ECO:0000318"/>
    <property type="project" value="GO_Central"/>
</dbReference>
<dbReference type="GO" id="GO:0120330">
    <property type="term" value="C:rixosome complex"/>
    <property type="evidence" value="ECO:0000353"/>
    <property type="project" value="PomBase"/>
</dbReference>
<dbReference type="GO" id="GO:0005524">
    <property type="term" value="F:ATP binding"/>
    <property type="evidence" value="ECO:0007669"/>
    <property type="project" value="UniProtKB-KW"/>
</dbReference>
<dbReference type="GO" id="GO:0016887">
    <property type="term" value="F:ATP hydrolysis activity"/>
    <property type="evidence" value="ECO:0000269"/>
    <property type="project" value="PomBase"/>
</dbReference>
<dbReference type="GO" id="GO:0005509">
    <property type="term" value="F:calcium ion binding"/>
    <property type="evidence" value="ECO:0000255"/>
    <property type="project" value="PomBase"/>
</dbReference>
<dbReference type="GO" id="GO:0000027">
    <property type="term" value="P:ribosomal large subunit assembly"/>
    <property type="evidence" value="ECO:0000318"/>
    <property type="project" value="GO_Central"/>
</dbReference>
<dbReference type="GO" id="GO:0000055">
    <property type="term" value="P:ribosomal large subunit export from nucleus"/>
    <property type="evidence" value="ECO:0000318"/>
    <property type="project" value="GO_Central"/>
</dbReference>
<dbReference type="GO" id="GO:0042254">
    <property type="term" value="P:ribosome biogenesis"/>
    <property type="evidence" value="ECO:0000315"/>
    <property type="project" value="PomBase"/>
</dbReference>
<dbReference type="CDD" id="cd00009">
    <property type="entry name" value="AAA"/>
    <property type="match status" value="2"/>
</dbReference>
<dbReference type="CDD" id="cd01460">
    <property type="entry name" value="vWA_midasin"/>
    <property type="match status" value="1"/>
</dbReference>
<dbReference type="FunFam" id="3.40.50.300:FF:000142">
    <property type="entry name" value="Midasin"/>
    <property type="match status" value="1"/>
</dbReference>
<dbReference type="FunFam" id="3.40.50.300:FF:000712">
    <property type="entry name" value="Midasin"/>
    <property type="match status" value="1"/>
</dbReference>
<dbReference type="FunFam" id="3.40.50.300:FF:001368">
    <property type="entry name" value="Midasin"/>
    <property type="match status" value="1"/>
</dbReference>
<dbReference type="FunFam" id="3.40.50.300:FF:002705">
    <property type="entry name" value="Midasin"/>
    <property type="match status" value="1"/>
</dbReference>
<dbReference type="FunFam" id="3.40.50.410:FF:000119">
    <property type="entry name" value="Midasin"/>
    <property type="match status" value="1"/>
</dbReference>
<dbReference type="Gene3D" id="3.40.50.300">
    <property type="entry name" value="P-loop containing nucleotide triphosphate hydrolases"/>
    <property type="match status" value="6"/>
</dbReference>
<dbReference type="Gene3D" id="3.40.50.410">
    <property type="entry name" value="von Willebrand factor, type A domain"/>
    <property type="match status" value="1"/>
</dbReference>
<dbReference type="InterPro" id="IPR003593">
    <property type="entry name" value="AAA+_ATPase"/>
</dbReference>
<dbReference type="InterPro" id="IPR040848">
    <property type="entry name" value="AAA_lid_7"/>
</dbReference>
<dbReference type="InterPro" id="IPR011704">
    <property type="entry name" value="ATPase_dyneun-rel_AAA"/>
</dbReference>
<dbReference type="InterPro" id="IPR048617">
    <property type="entry name" value="MDN1_AAA_lid_4"/>
</dbReference>
<dbReference type="InterPro" id="IPR012099">
    <property type="entry name" value="Midasin"/>
</dbReference>
<dbReference type="InterPro" id="IPR041190">
    <property type="entry name" value="Midasin_AAA_lid_5"/>
</dbReference>
<dbReference type="InterPro" id="IPR027417">
    <property type="entry name" value="P-loop_NTPase"/>
</dbReference>
<dbReference type="InterPro" id="IPR002035">
    <property type="entry name" value="VWF_A"/>
</dbReference>
<dbReference type="InterPro" id="IPR036465">
    <property type="entry name" value="vWFA_dom_sf"/>
</dbReference>
<dbReference type="PANTHER" id="PTHR48103:SF2">
    <property type="entry name" value="MIDASIN"/>
    <property type="match status" value="1"/>
</dbReference>
<dbReference type="PANTHER" id="PTHR48103">
    <property type="entry name" value="MIDASIN-RELATED"/>
    <property type="match status" value="1"/>
</dbReference>
<dbReference type="Pfam" id="PF07728">
    <property type="entry name" value="AAA_5"/>
    <property type="match status" value="8"/>
</dbReference>
<dbReference type="Pfam" id="PF17865">
    <property type="entry name" value="AAA_lid_5"/>
    <property type="match status" value="1"/>
</dbReference>
<dbReference type="Pfam" id="PF17867">
    <property type="entry name" value="AAA_lid_7"/>
    <property type="match status" value="3"/>
</dbReference>
<dbReference type="Pfam" id="PF21108">
    <property type="entry name" value="MDN1_4th"/>
    <property type="match status" value="1"/>
</dbReference>
<dbReference type="PIRSF" id="PIRSF010340">
    <property type="entry name" value="Midasin"/>
    <property type="match status" value="1"/>
</dbReference>
<dbReference type="SMART" id="SM00382">
    <property type="entry name" value="AAA"/>
    <property type="match status" value="5"/>
</dbReference>
<dbReference type="SUPFAM" id="SSF52540">
    <property type="entry name" value="P-loop containing nucleoside triphosphate hydrolases"/>
    <property type="match status" value="6"/>
</dbReference>
<dbReference type="SUPFAM" id="SSF53300">
    <property type="entry name" value="vWA-like"/>
    <property type="match status" value="1"/>
</dbReference>
<dbReference type="PROSITE" id="PS50234">
    <property type="entry name" value="VWFA"/>
    <property type="match status" value="1"/>
</dbReference>
<protein>
    <recommendedName>
        <fullName>Midasin</fullName>
    </recommendedName>
    <alternativeName>
        <fullName>Dynein-related AAA-ATPase mdn1</fullName>
    </alternativeName>
    <alternativeName>
        <fullName>MIDAS-containing protein</fullName>
    </alternativeName>
</protein>
<evidence type="ECO:0000250" key="1">
    <source>
        <dbReference type="UniProtKB" id="Q12019"/>
    </source>
</evidence>
<evidence type="ECO:0000255" key="2"/>
<evidence type="ECO:0000255" key="3">
    <source>
        <dbReference type="PROSITE-ProRule" id="PRU00219"/>
    </source>
</evidence>
<evidence type="ECO:0000256" key="4">
    <source>
        <dbReference type="SAM" id="MobiDB-lite"/>
    </source>
</evidence>
<evidence type="ECO:0000269" key="5">
    <source>
    </source>
</evidence>
<evidence type="ECO:0000269" key="6">
    <source>
    </source>
</evidence>
<evidence type="ECO:0000305" key="7"/>
<comment type="function">
    <text evidence="1">Nuclear chaperone required for maturation and nuclear export of pre-60S ribosome subunits. Functions at successive maturation steps to remove ribosomal factors at critical transition points, first driving the exit of early pre-60S particles from the nucleolus and then driving late pre-60S particles from the nucleus.</text>
</comment>
<comment type="subunit">
    <text evidence="1">Associates with pre-60S ribosomes in the nucleoplasm.</text>
</comment>
<comment type="subcellular location">
    <subcellularLocation>
        <location evidence="5">Nucleus</location>
    </subcellularLocation>
    <subcellularLocation>
        <location evidence="1">Nucleus</location>
        <location evidence="1">Nucleolus</location>
    </subcellularLocation>
    <subcellularLocation>
        <location evidence="1">Nucleus</location>
        <location evidence="1">Nucleoplasm</location>
    </subcellularLocation>
</comment>
<comment type="similarity">
    <text evidence="7">Belongs to the midasin family.</text>
</comment>
<accession>O94248</accession>
<sequence length="4717" mass="537787">MDVLIEWVAIYPQIYDILEHINYVPSNTLQRLRLHQPWSKIDYDVWFLYASDEIRETCKVKYYGETKTYGEVFVLENERISQLHRLFVSWTVSERAEHLKNLLFDAGLSNLPLVELGGNVFFNSHVPLPCSLVLTKSTQENLNRITPYLVQKRPILLAGPEGIGKKFLITQIAAKLGQQIIRIHLSDSTDPKMLIGTYTSPKPGEFEWQPGVLTQAVITGKWILFTNIEHAPSEVLSVLLPLLEKRQLVIPSRGETIYAKGSFQMFATSSMKTKILGQRLWQILDLTYQPDECVEVVSTLYPVLSIICPTLYSVYKDIFDLFSQRSFLATSKIYRRLCLRDFYKFIKRVAFLYHKFMIPSDHVVISQELQDAVFKEAIDMFGAFIPSRDGFDLVVRNVAIELNIPPEKALQLRYSIPVFQNLEHNINIGRCSLKKLSTIRSCSTNSYAFTSSSLGLLEQLAAGVQTNEPLLLVGETGTGKTTTIQLLAGLLGQKVTVINMSQQTESSDMLGGYKPINASTLGLPLHERFIDIFEQTFSSKKNAKFISMASTSARRFRWKTCLKIWKEACKLSKTVLDGQQPLPNPQKRQKRLSNQVELRNQWAKFEKEVEDFEKVLTGGSNGFMFSFVEGALVKAVRSGHWVLLDEINLASLETLEPIGQLLSSYESGILLSERGDITPITPHKNFRLFGCMNPSTDVGKRELEPSFRSRFTEIYVHSPDQNLDDLLSIIQKYIGSLCIGNEHVIREVAELYQVAKSLSLDGSLVDGAGQRPHYTVRTLSRTLSYVTEIAPIYGLRRSLYEGFCMSFLTLLDHTSESLLYNHVVRFTLGELNRDQQNAILKQIPKVPDHSSYIAFCHYWLRRGSFPVEEQEHYIITPFVQKNLLNIARACSTRMFPILIQGPTSSGKTSMIEYVAKKTGHKFVRINNHEHTDLQEYIGTYVTDDNGSLSFREGVLVEALRNGYWIVLDELNLAPTDVLEALNRLLDDNRELFIPETQVLVKPHPEFMLFATQNPPGVYAGRKHLSRAFRNRFLEIHFDDIPENELETILHKRCKIAPSYAAKIVQVFRELSLRRQTTRIFEQKNSFATLRDLFRWAFREAVGYQQLAENGYMLLAERARDQKDKLAVQEVIEKVMKVKIDTDGIYNLDSMEIFQDMSLKEGPLSKVVWTRPMIRLFCLVWRCLLAKEPVLLVGDTGCGKTTVCQILAECLHKELHIINAHQDTENGDIIGAQRPVRNRSAVNYSLHSQLCEKFNVQESLDSIDDLIEKFEKLSSSEKNDNLSNLIERQIIKYRSLFEWHDGALVTAMKQGDFFLLDEISLADDSVLERLNSVLELSRTLTLVEHSNAAVSLTAKDGFAFFATMNPGGDYGKKELSPALRNRFTEIWVPPMVDTEDILKIVEGKLHNNKIELARPLVEYAKWHANEYLYTDVISIRDVLSAVEFINACEILDLNLVLFNAVSMVFIDALGSFTTFSLSNNLASLHAERQRCFAKLNELAGSNIMASKSADISIKFSDSSFFIGDFGIPLGDSVESDSTYSLHTDTTLMNASKVLRALQVLKPILLEGSPGVGKTSLITALARETGHQLVRINLSDQTDLMDLFGSDVPVEGGEGGQFAWRDAPFLAAMRNGHWVLLDELNLASQSVLEGLNACLDHRNEAYIPELDKVFKAHPNFRVFAAQNPQHQGGGRKGLPRSFINRFSVVYVEALKEKDMIEIAACNYHQVNEDWRLKIIKFMFRLQDNIEKDISFGSFGSPWEFNLRDTLRWLQLLNDAPKYTCVSPADYLEVMVLHRMRTVEDRVRTCELFKEVFDIDYEPRTIGFSLSSQCFKVGHSLLVRDVERQKTLLDSQNILQSQLPVLESVITCINKKWPCILVGDTATGKTCILRLLAAIAGAKIKEMAVNSDTDTMDLIGEYEQIDISRKASELFTDLSQQLLNIVIKYRNFDNIFRETSLYTLTTTSFKTHSQAFTLLQKVVDQLDQLKIHETLVHSLGDIHEKARKLLAEFSASPAGRFEWFDGYLLKAVEEGHWFVLDNANLCSPAVLDRLNSLLEHKGVLIVNEKTTEDGHPKTIKPHPNFRLFLTVNPVYGELSRAMRNRGVEIFLLKEALTEIDKKQMSLLEPAPISSAVDTLASNISYIKYVFETMGKIEIDGNYMYIAHAIILALFSPRQLKLLRKVLLTNPQFSLSIKADAELLLTLKNLVQKIYCADYFNHMDLKASRFMDIYEYPVQLREVVGLIQTINDFQSVILTSHLELPETYASGLLFVSAHEILDLTEEVNRLAVSTSNSTYLLKSASAVYHNVSSFKGSTPSLWNLLNQFSKFLIEIASANSNIVYKLSYDVIRHFLKLVVLWKNIYVWTNVPDCDISRFYCYTKMLGEWMFTLTEKTKLLESFLPKDSLEKFSELQNLSTGLHMQAIWDKWHAFVPRTYDQWSLWNTVDKLLTQYVNANIPSISMETTACEVVGTSLSLLNKVLVENEVGDIYSYLKILGKGVNELKSSKQVILPENLVNLFNCLASLDLLHIFIKYTTSSFFLTDDFVRFIRVCFHSRISGNLLTLLHGISFDSTKAVAPVLTYFDFCSLTTGNILGRIALAFTSIDENANLESANIFEHARLALLQHFMDHSSLLAEDSSTKMNLILLQRYAVIISIFLDQGKCEKANDLITKLSLPYEELAENFVSILEACKAFLVANSEFISYTYTERFIHSLRFLKDSWLSSNQQKMLKNQGMAYIYFASGMLLVYVPDKPFDPALLPLLTVESLRHYLESLYKESQILEIAESLNSGKVNSVMRRLVSTEISNTPNIDSSFSTVYRSLNESIVPLYSELEFFMKSVVLNQYIFELAMRLSKESNIAVVEEAKSFVTKWKAYIERIREAYPQFVDVYELILSFISFMIYGIELLMFEAKRRLDERSQILSTLILTLVDPSSFARSLSFDDVSNLIEQIKVLDLNDSIRFEIYLFLASRLCSEKQHSSDTHSLANSFVLLANEFYIHNAKIKQKELEEIEEKNRLYRQREFNFDKNDYLKVFINYDDEVEPEVEPEVVIERKRFLQLQFAFWSLYNEIYSEKMNVIPLEQLMNTGSYLAKKIKVKNPDMIASSGFDIVSVVLMMGVKSTNERQYWTPPVYNFYSDPNPSKAIEVRDLIKIVESRAISLIKNWPENFVLRGLKDAIDAILNLSPFSPIAEYLSKLERVFHLLSEWEKLASREYSLANEMDLIKKKIIDWRKFELSNWNNLLKLEEYKLSERVYPRLYSILQFIILKPFFENSKFTKQNLCESASIIVQFITDLTVGEFQLCLKCLLSFSQHAASLRICHGIDAMLLNIYHYFEQFLSKVSEAIHTQKQSLENSIKERILLMSWKDTNVYALKESAKKSHAELFKVLHRYREVLRQPVSSYLSQKHDWDSLLDTENNSAMWVAKKVNLSPSYIEKMDTEIMKLVPVRFSNTPTTLRLMWTLFANVEKPGSTFTNMVSNLITDARELMKLTPETINDDNLSEIKHLKSRKHLLLTETFKTLKAFGLQYRVKAGIEENLSNLRNLLAVIPTFPVTSLSIEKVDRSLMKSLDFIPKFQTLAGHQHNDLSVPEVQKGVGLFNSMLSLQLGERAQLVEFTNELLALKNVYSEVGVNGSPLESFNNSSFNEVSSLGYDHDFENRAQAVSMLCQIYAIVIQKHSSISPTASFQSIGHELSRFADLLSNKLFPSSIPLYASADKVSSIRDQQKGINDLIEYCRKKRTELPELSYCFKHLVSLQSLKSISRTQVDLTNDEFLNLMNFVLNLFDSLLSSIETATKNMRTFKELAETSSFIEMSSCFSKVLRAFNLKFQSMKLSSLKEKLRSSSVDKMSCQLLMLFLPVCEQFINLAESVLDYFINVHNSNLDSLSKISTLFFMVANNGFCSPDLPQEGKSNSGELESGTGLGSGVGAEDITNTLNEDDDLEELANEEDTANQSDLDESEARELESDMNGVTKDSVVSENENSDSEEENQDLDEEVNDIPEDLSNSLNEKLWDEPNEEDLLETEQKSNEQSAANNESDLVSKEDDNKALEDKDRQEKEDEEEMSDDVGIDDEIQPDIQENNSQPPPENEDHLDLPEDLKLDEKEGDVSKDSDLEDMDMEAADENKEEADAEKDEPMQDFEDPLEENNTLDEDIQQDDFSDLAEDDEKMNEDGFEENVQENEESTEDGVKSDEELEQGEVPEDQAIDNHPKMDAKSTFASAEADEENTDKGIVGENEELGEEDGAAESGVRGNGTADGEFSSAEQVQKGEDTSTPKEAMSEADRQYQSLGDHLREWQQANRIHEWEDLTESQSQAFDDSEFMHVKEDEEEDLQALGNAEKDQIKSIDRDESANQNPDSMNSTNIAEDEADEVGDKQLQDGQDISDIKQTGEDTLPTEFGSINQSEKVFELSEDEDIEDELPDYNVKITNLPAAMPIDEARDLWNKHEDSTKQLSIELCEQLRLILEPTLATKMQGDFRTGKRLNMKRIIPYIASQFKKDKIWMRRVKPSKRTYQVMISIDDSKSMSESGSTVLALETLALVTKALSLLEVGQIAVMKFGEQPELLHPFDKQFSSESGVQMFSHFTFEQSNTNVLALADASMKCFNYANTASHHRSNSDIRQLEIIISDGICEDHDSIRKLLRRAQEEKVMIVFVILDNVNTQKKSSILDIKKVYYDTKEDGTMDLKIQPYIDEFAFDYYLVVRNIEELPQLLSSALRQWFQQMSNT</sequence>